<evidence type="ECO:0000250" key="1"/>
<evidence type="ECO:0000250" key="2">
    <source>
        <dbReference type="UniProtKB" id="Q9X1H9"/>
    </source>
</evidence>
<evidence type="ECO:0000255" key="3">
    <source>
        <dbReference type="PROSITE-ProRule" id="PRU00815"/>
    </source>
</evidence>
<dbReference type="EMBL" id="BX571856">
    <property type="protein sequence ID" value="CAG40435.1"/>
    <property type="molecule type" value="Genomic_DNA"/>
</dbReference>
<dbReference type="SMR" id="Q6GGY2"/>
<dbReference type="KEGG" id="sar:SAR1438"/>
<dbReference type="HOGENOM" id="CLU_048251_3_2_9"/>
<dbReference type="Proteomes" id="UP000000596">
    <property type="component" value="Chromosome"/>
</dbReference>
<dbReference type="GO" id="GO:0008289">
    <property type="term" value="F:lipid binding"/>
    <property type="evidence" value="ECO:0007669"/>
    <property type="project" value="UniProtKB-KW"/>
</dbReference>
<dbReference type="Gene3D" id="3.30.1180.10">
    <property type="match status" value="1"/>
</dbReference>
<dbReference type="Gene3D" id="3.40.50.10170">
    <property type="match status" value="1"/>
</dbReference>
<dbReference type="InterPro" id="IPR003797">
    <property type="entry name" value="DegV"/>
</dbReference>
<dbReference type="InterPro" id="IPR043168">
    <property type="entry name" value="DegV_C"/>
</dbReference>
<dbReference type="InterPro" id="IPR050270">
    <property type="entry name" value="DegV_domain_contain"/>
</dbReference>
<dbReference type="NCBIfam" id="TIGR00762">
    <property type="entry name" value="DegV"/>
    <property type="match status" value="1"/>
</dbReference>
<dbReference type="PANTHER" id="PTHR33434">
    <property type="entry name" value="DEGV DOMAIN-CONTAINING PROTEIN DR_1986-RELATED"/>
    <property type="match status" value="1"/>
</dbReference>
<dbReference type="PANTHER" id="PTHR33434:SF8">
    <property type="entry name" value="DEGV DOMAIN-CONTAINING PROTEIN SPR1019"/>
    <property type="match status" value="1"/>
</dbReference>
<dbReference type="Pfam" id="PF02645">
    <property type="entry name" value="DegV"/>
    <property type="match status" value="1"/>
</dbReference>
<dbReference type="SUPFAM" id="SSF82549">
    <property type="entry name" value="DAK1/DegV-like"/>
    <property type="match status" value="1"/>
</dbReference>
<dbReference type="PROSITE" id="PS51482">
    <property type="entry name" value="DEGV"/>
    <property type="match status" value="1"/>
</dbReference>
<gene>
    <name type="ordered locus">SAR1438</name>
</gene>
<reference key="1">
    <citation type="journal article" date="2004" name="Proc. Natl. Acad. Sci. U.S.A.">
        <title>Complete genomes of two clinical Staphylococcus aureus strains: evidence for the rapid evolution of virulence and drug resistance.</title>
        <authorList>
            <person name="Holden M.T.G."/>
            <person name="Feil E.J."/>
            <person name="Lindsay J.A."/>
            <person name="Peacock S.J."/>
            <person name="Day N.P.J."/>
            <person name="Enright M.C."/>
            <person name="Foster T.J."/>
            <person name="Moore C.E."/>
            <person name="Hurst L."/>
            <person name="Atkin R."/>
            <person name="Barron A."/>
            <person name="Bason N."/>
            <person name="Bentley S.D."/>
            <person name="Chillingworth C."/>
            <person name="Chillingworth T."/>
            <person name="Churcher C."/>
            <person name="Clark L."/>
            <person name="Corton C."/>
            <person name="Cronin A."/>
            <person name="Doggett J."/>
            <person name="Dowd L."/>
            <person name="Feltwell T."/>
            <person name="Hance Z."/>
            <person name="Harris B."/>
            <person name="Hauser H."/>
            <person name="Holroyd S."/>
            <person name="Jagels K."/>
            <person name="James K.D."/>
            <person name="Lennard N."/>
            <person name="Line A."/>
            <person name="Mayes R."/>
            <person name="Moule S."/>
            <person name="Mungall K."/>
            <person name="Ormond D."/>
            <person name="Quail M.A."/>
            <person name="Rabbinowitsch E."/>
            <person name="Rutherford K.M."/>
            <person name="Sanders M."/>
            <person name="Sharp S."/>
            <person name="Simmonds M."/>
            <person name="Stevens K."/>
            <person name="Whitehead S."/>
            <person name="Barrell B.G."/>
            <person name="Spratt B.G."/>
            <person name="Parkhill J."/>
        </authorList>
    </citation>
    <scope>NUCLEOTIDE SEQUENCE [LARGE SCALE GENOMIC DNA]</scope>
    <source>
        <strain>MRSA252</strain>
    </source>
</reference>
<sequence length="279" mass="30616">MTKQIIVTDSTSDLSKEYLEANNIHVIPLSLTIEGASYVDQVDITSEEFINHIENDEDVKTSQPAIGEFISAYEELGKDGSEIISIHLSSGLSGTFNTAYQASQMVDANVTVIDSKSISFGLGYQIQHLVELVKEGVSTSEIVKKLNHLRENIKLFVVIGQLNQLIKGGRISKTKGLIGNLMKIKPIGTLDDGRLELVHNARTQNSSIQYLKKEIAEFIGDHEIKSVGVAHANVIEYVDKLKKVFNEAFHVDNYDINVTTPVISAHTGQGAIGLVVLKK</sequence>
<accession>Q6GGY2</accession>
<proteinExistence type="inferred from homology"/>
<keyword id="KW-0446">Lipid-binding</keyword>
<comment type="function">
    <text evidence="1">May bind long-chain fatty acids, such as palmitate, and may play a role in lipid transport or fatty acid metabolism.</text>
</comment>
<name>Y1438_STAAR</name>
<protein>
    <recommendedName>
        <fullName>DegV domain-containing protein SAR1438</fullName>
    </recommendedName>
</protein>
<feature type="chain" id="PRO_0000209790" description="DegV domain-containing protein SAR1438">
    <location>
        <begin position="1"/>
        <end position="279"/>
    </location>
</feature>
<feature type="domain" description="DegV" evidence="3">
    <location>
        <begin position="4"/>
        <end position="278"/>
    </location>
</feature>
<feature type="binding site" evidence="2">
    <location>
        <position position="61"/>
    </location>
    <ligand>
        <name>hexadecanoate</name>
        <dbReference type="ChEBI" id="CHEBI:7896"/>
    </ligand>
</feature>
<feature type="binding site" evidence="2">
    <location>
        <position position="93"/>
    </location>
    <ligand>
        <name>hexadecanoate</name>
        <dbReference type="ChEBI" id="CHEBI:7896"/>
    </ligand>
</feature>
<organism>
    <name type="scientific">Staphylococcus aureus (strain MRSA252)</name>
    <dbReference type="NCBI Taxonomy" id="282458"/>
    <lineage>
        <taxon>Bacteria</taxon>
        <taxon>Bacillati</taxon>
        <taxon>Bacillota</taxon>
        <taxon>Bacilli</taxon>
        <taxon>Bacillales</taxon>
        <taxon>Staphylococcaceae</taxon>
        <taxon>Staphylococcus</taxon>
    </lineage>
</organism>